<protein>
    <recommendedName>
        <fullName evidence="1">L-aspartate/glutamate-specific racemase</fullName>
        <shortName evidence="1">L-Asp/Glu-specific racemase</shortName>
        <ecNumber evidence="1">5.1.1.13</ecNumber>
        <ecNumber evidence="1">5.1.1.3</ecNumber>
    </recommendedName>
    <alternativeName>
        <fullName evidence="3">EcL-DER</fullName>
    </alternativeName>
</protein>
<organism>
    <name type="scientific">Escherichia coli O157:H7</name>
    <dbReference type="NCBI Taxonomy" id="83334"/>
    <lineage>
        <taxon>Bacteria</taxon>
        <taxon>Pseudomonadati</taxon>
        <taxon>Pseudomonadota</taxon>
        <taxon>Gammaproteobacteria</taxon>
        <taxon>Enterobacterales</taxon>
        <taxon>Enterobacteriaceae</taxon>
        <taxon>Escherichia</taxon>
    </lineage>
</organism>
<comment type="function">
    <text evidence="1">Exhibits racemase activity for both L-glutamate and L-aspartate.</text>
</comment>
<comment type="catalytic activity">
    <reaction evidence="1">
        <text>L-glutamate = D-glutamate</text>
        <dbReference type="Rhea" id="RHEA:12813"/>
        <dbReference type="ChEBI" id="CHEBI:29985"/>
        <dbReference type="ChEBI" id="CHEBI:29986"/>
        <dbReference type="EC" id="5.1.1.3"/>
    </reaction>
    <physiologicalReaction direction="left-to-right" evidence="1">
        <dbReference type="Rhea" id="RHEA:12814"/>
    </physiologicalReaction>
</comment>
<comment type="catalytic activity">
    <reaction evidence="1">
        <text>L-aspartate = D-aspartate</text>
        <dbReference type="Rhea" id="RHEA:14973"/>
        <dbReference type="ChEBI" id="CHEBI:29990"/>
        <dbReference type="ChEBI" id="CHEBI:29991"/>
        <dbReference type="EC" id="5.1.1.13"/>
    </reaction>
    <physiologicalReaction direction="left-to-right" evidence="1">
        <dbReference type="Rhea" id="RHEA:14974"/>
    </physiologicalReaction>
</comment>
<comment type="subunit">
    <text evidence="1">Homodimer.</text>
</comment>
<comment type="similarity">
    <text evidence="4">Belongs to the aspartate/glutamate racemases family.</text>
</comment>
<accession>A0A0H3JGH6</accession>
<sequence length="230" mass="25308">MKTIGLLGGMSWESTIPYYRLINEGIKQRLGGLHSAQVLLHSVDFHEIEECQRRGEWDKTGDILAEAALGLQRAGAEGIVLCTNTMHKVADAIESRCTLPFLHIADATGRAITGAGMTRVALLGTRYTMEQDFYRGRLTEQFSINCLIPEADERAKINQIIFEELCLGQFTEASRAYYAQVIARLAEQGAQGVIFGCTEIGLLVPEERSVLPVFDTAAIHAEDAVAFMLS</sequence>
<evidence type="ECO:0000250" key="1">
    <source>
        <dbReference type="UniProtKB" id="A0A140N890"/>
    </source>
</evidence>
<evidence type="ECO:0000269" key="2">
    <source>
    </source>
</evidence>
<evidence type="ECO:0000303" key="3">
    <source>
    </source>
</evidence>
<evidence type="ECO:0000305" key="4"/>
<evidence type="ECO:0000305" key="5">
    <source>
    </source>
</evidence>
<evidence type="ECO:0000312" key="6">
    <source>
        <dbReference type="EMBL" id="BAB37120.1"/>
    </source>
</evidence>
<evidence type="ECO:0000312" key="7">
    <source>
        <dbReference type="EMBL" id="BBC51991.1"/>
    </source>
</evidence>
<evidence type="ECO:0000312" key="8">
    <source>
        <dbReference type="EMBL" id="RNG11621.1"/>
    </source>
</evidence>
<evidence type="ECO:0007744" key="9">
    <source>
        <dbReference type="PDB" id="5HQT"/>
    </source>
</evidence>
<evidence type="ECO:0007744" key="10">
    <source>
        <dbReference type="PDB" id="5HRA"/>
    </source>
</evidence>
<evidence type="ECO:0007744" key="11">
    <source>
        <dbReference type="PDB" id="5HRC"/>
    </source>
</evidence>
<name>YGEA_ECO57</name>
<reference key="1">
    <citation type="journal article" date="2001" name="DNA Res.">
        <title>Complete genome sequence of enterohemorrhagic Escherichia coli O157:H7 and genomic comparison with a laboratory strain K-12.</title>
        <authorList>
            <person name="Hayashi T."/>
            <person name="Makino K."/>
            <person name="Ohnishi M."/>
            <person name="Kurokawa K."/>
            <person name="Ishii K."/>
            <person name="Yokoyama K."/>
            <person name="Han C.-G."/>
            <person name="Ohtsubo E."/>
            <person name="Nakayama K."/>
            <person name="Murata T."/>
            <person name="Tanaka M."/>
            <person name="Tobe T."/>
            <person name="Iida T."/>
            <person name="Takami H."/>
            <person name="Honda T."/>
            <person name="Sasakawa C."/>
            <person name="Ogasawara N."/>
            <person name="Yasunaga T."/>
            <person name="Kuhara S."/>
            <person name="Shiba T."/>
            <person name="Hattori M."/>
            <person name="Shinagawa H."/>
        </authorList>
    </citation>
    <scope>NUCLEOTIDE SEQUENCE [LARGE SCALE GENOMIC DNA]</scope>
    <source>
        <strain>O157:H7 / Sakai / RIMD 0509952 / EHEC</strain>
    </source>
</reference>
<reference key="2">
    <citation type="submission" date="2018-01" db="EMBL/GenBank/DDBJ databases">
        <title>Genomic characterization of a non-sorbitol-fermenting and b-glucuronidase-positive O157:H7 strain.</title>
        <authorList>
            <person name="Ogura Y."/>
            <person name="Seto K."/>
            <person name="Morimoto Y."/>
            <person name="Nakamura K."/>
            <person name="Gotoh Y."/>
            <person name="Toyoda A."/>
            <person name="Itoh T."/>
            <person name="Ohnishi M."/>
            <person name="Hayashi T."/>
        </authorList>
    </citation>
    <scope>NUCLEOTIDE SEQUENCE [LARGE SCALE GENOMIC DNA]</scope>
    <source>
        <strain>O157:H7 / Pv15-279</strain>
    </source>
</reference>
<reference key="3">
    <citation type="submission" date="2018-11" db="EMBL/GenBank/DDBJ databases">
        <title>Draft genome sequence of Shiga toxin-producing Escherichia coli O157:H7 strain C1-067, isolated from feedlot cattle.</title>
        <authorList>
            <person name="Jia M."/>
            <person name="Yang H."/>
        </authorList>
    </citation>
    <scope>NUCLEOTIDE SEQUENCE [LARGE SCALE GENOMIC DNA]</scope>
    <source>
        <strain>O157:H7 / C1-067</strain>
    </source>
</reference>
<reference evidence="9 10 11" key="4">
    <citation type="journal article" date="2016" name="FEBS Lett.">
        <title>Crystal structure and molecular mechanism of an aspartate/glutamate racemase from Escherichiacoli O157.</title>
        <authorList>
            <person name="Liu X."/>
            <person name="Gao F."/>
            <person name="Ma Y."/>
            <person name="Liu S."/>
            <person name="Cui Y."/>
            <person name="Yuan Z."/>
            <person name="Kang X."/>
        </authorList>
    </citation>
    <scope>X-RAY CRYSTALLOGRAPHY (1.60 ANGSTROMS) OF APOENZYME AND IN COMPLEXES WITH L-ASPARTATE AND D-ASPARTATE</scope>
    <scope>ACTIVE SITE</scope>
    <source>
        <strain>O157:H7 / Sakai / RIMD 0509952 / EHEC</strain>
    </source>
</reference>
<proteinExistence type="evidence at protein level"/>
<dbReference type="EC" id="5.1.1.13" evidence="1"/>
<dbReference type="EC" id="5.1.1.3" evidence="1"/>
<dbReference type="EMBL" id="BA000007">
    <property type="protein sequence ID" value="BAB37120.1"/>
    <property type="molecule type" value="Genomic_DNA"/>
</dbReference>
<dbReference type="EMBL" id="AP018488">
    <property type="protein sequence ID" value="BBC51991.1"/>
    <property type="molecule type" value="Genomic_DNA"/>
</dbReference>
<dbReference type="EMBL" id="RICC01000001">
    <property type="protein sequence ID" value="RNG11621.1"/>
    <property type="molecule type" value="Genomic_DNA"/>
</dbReference>
<dbReference type="RefSeq" id="NP_311724.1">
    <property type="nucleotide sequence ID" value="NC_002695.1"/>
</dbReference>
<dbReference type="RefSeq" id="WP_000848664.1">
    <property type="nucleotide sequence ID" value="NZ_VOAI01000003.1"/>
</dbReference>
<dbReference type="PDB" id="5HQT">
    <property type="method" value="X-ray"/>
    <property type="resolution" value="1.60 A"/>
    <property type="chains" value="A=1-230"/>
</dbReference>
<dbReference type="PDB" id="5HRA">
    <property type="method" value="X-ray"/>
    <property type="resolution" value="1.60 A"/>
    <property type="chains" value="A/B=1-230"/>
</dbReference>
<dbReference type="PDB" id="5HRC">
    <property type="method" value="X-ray"/>
    <property type="resolution" value="1.76 A"/>
    <property type="chains" value="A/B=1-230"/>
</dbReference>
<dbReference type="PDBsum" id="5HQT"/>
<dbReference type="PDBsum" id="5HRA"/>
<dbReference type="PDBsum" id="5HRC"/>
<dbReference type="SMR" id="A0A0H3JGH6"/>
<dbReference type="STRING" id="155864.Z4160"/>
<dbReference type="GeneID" id="916475"/>
<dbReference type="GeneID" id="93779156"/>
<dbReference type="KEGG" id="ecs:ECs_3697"/>
<dbReference type="PATRIC" id="fig|386585.9.peg.3864"/>
<dbReference type="eggNOG" id="COG1794">
    <property type="taxonomic scope" value="Bacteria"/>
</dbReference>
<dbReference type="HOGENOM" id="CLU_055360_1_0_6"/>
<dbReference type="OMA" id="YDTTAIH"/>
<dbReference type="Proteomes" id="UP000000558">
    <property type="component" value="Chromosome"/>
</dbReference>
<dbReference type="GO" id="GO:0047689">
    <property type="term" value="F:aspartate racemase activity"/>
    <property type="evidence" value="ECO:0007669"/>
    <property type="project" value="UniProtKB-EC"/>
</dbReference>
<dbReference type="GO" id="GO:0008881">
    <property type="term" value="F:glutamate racemase activity"/>
    <property type="evidence" value="ECO:0007669"/>
    <property type="project" value="UniProtKB-EC"/>
</dbReference>
<dbReference type="FunFam" id="3.40.50.1860:FF:000003">
    <property type="entry name" value="Aspartate racemase"/>
    <property type="match status" value="1"/>
</dbReference>
<dbReference type="FunFam" id="3.40.50.1860:FF:000004">
    <property type="entry name" value="Aspartate racemase"/>
    <property type="match status" value="1"/>
</dbReference>
<dbReference type="Gene3D" id="3.40.50.1860">
    <property type="match status" value="2"/>
</dbReference>
<dbReference type="InterPro" id="IPR015942">
    <property type="entry name" value="Asp/Glu/hydantoin_racemase"/>
</dbReference>
<dbReference type="InterPro" id="IPR001920">
    <property type="entry name" value="Asp/Glu_race"/>
</dbReference>
<dbReference type="InterPro" id="IPR018187">
    <property type="entry name" value="Asp/Glu_racemase_AS_1"/>
</dbReference>
<dbReference type="InterPro" id="IPR033134">
    <property type="entry name" value="Asp/Glu_racemase_AS_2"/>
</dbReference>
<dbReference type="InterPro" id="IPR004380">
    <property type="entry name" value="Asp_race"/>
</dbReference>
<dbReference type="NCBIfam" id="TIGR00035">
    <property type="entry name" value="asp_race"/>
    <property type="match status" value="1"/>
</dbReference>
<dbReference type="NCBIfam" id="NF007569">
    <property type="entry name" value="PRK10200.1"/>
    <property type="match status" value="1"/>
</dbReference>
<dbReference type="PANTHER" id="PTHR21198:SF7">
    <property type="entry name" value="ASPARTATE-GLUTAMATE RACEMASE FAMILY"/>
    <property type="match status" value="1"/>
</dbReference>
<dbReference type="PANTHER" id="PTHR21198">
    <property type="entry name" value="GLUTAMATE RACEMASE"/>
    <property type="match status" value="1"/>
</dbReference>
<dbReference type="Pfam" id="PF01177">
    <property type="entry name" value="Asp_Glu_race"/>
    <property type="match status" value="1"/>
</dbReference>
<dbReference type="SUPFAM" id="SSF53681">
    <property type="entry name" value="Aspartate/glutamate racemase"/>
    <property type="match status" value="2"/>
</dbReference>
<dbReference type="PROSITE" id="PS00923">
    <property type="entry name" value="ASP_GLU_RACEMASE_1"/>
    <property type="match status" value="1"/>
</dbReference>
<dbReference type="PROSITE" id="PS00924">
    <property type="entry name" value="ASP_GLU_RACEMASE_2"/>
    <property type="match status" value="1"/>
</dbReference>
<keyword id="KW-0002">3D-structure</keyword>
<keyword id="KW-0413">Isomerase</keyword>
<keyword id="KW-1185">Reference proteome</keyword>
<gene>
    <name evidence="6" type="primary">ygeA</name>
    <name evidence="6" type="ordered locus">ECs3697</name>
    <name evidence="7" type="ORF">ECpv15279_3665</name>
    <name evidence="8" type="ORF">EFE38_05130</name>
</gene>
<feature type="chain" id="PRO_0000447008" description="L-aspartate/glutamate-specific racemase">
    <location>
        <begin position="1"/>
        <end position="230"/>
    </location>
</feature>
<feature type="active site" description="Proton donor" evidence="5">
    <location>
        <position position="83"/>
    </location>
</feature>
<feature type="active site" description="Proton acceptor" evidence="5">
    <location>
        <position position="197"/>
    </location>
</feature>
<feature type="binding site" evidence="2">
    <location>
        <position position="10"/>
    </location>
    <ligand>
        <name>substrate</name>
    </ligand>
</feature>
<feature type="binding site" evidence="2">
    <location>
        <position position="52"/>
    </location>
    <ligand>
        <name>substrate</name>
    </ligand>
</feature>
<feature type="binding site" evidence="2">
    <location>
        <begin position="83"/>
        <end position="85"/>
    </location>
    <ligand>
        <name>substrate</name>
    </ligand>
</feature>
<feature type="binding site" evidence="2">
    <location>
        <begin position="198"/>
        <end position="199"/>
    </location>
    <ligand>
        <name>substrate</name>
    </ligand>
</feature>